<proteinExistence type="inferred from homology"/>
<reference key="1">
    <citation type="journal article" date="1998" name="Science">
        <title>Genome sequence of the nematode C. elegans: a platform for investigating biology.</title>
        <authorList>
            <consortium name="The C. elegans sequencing consortium"/>
        </authorList>
    </citation>
    <scope>NUCLEOTIDE SEQUENCE [LARGE SCALE GENOMIC DNA]</scope>
    <source>
        <strain>Bristol N2</strain>
    </source>
</reference>
<dbReference type="EMBL" id="FO080814">
    <property type="protein sequence ID" value="CCD67000.1"/>
    <property type="molecule type" value="Genomic_DNA"/>
</dbReference>
<dbReference type="PIR" id="T34450">
    <property type="entry name" value="T34450"/>
</dbReference>
<dbReference type="RefSeq" id="NP_504304.2">
    <property type="nucleotide sequence ID" value="NM_071903.4"/>
</dbReference>
<dbReference type="SMR" id="O01609"/>
<dbReference type="FunCoup" id="O01609">
    <property type="interactions" value="1"/>
</dbReference>
<dbReference type="PaxDb" id="6239-T19H12.4"/>
<dbReference type="EnsemblMetazoa" id="T19H12.4.1">
    <property type="protein sequence ID" value="T19H12.4.1"/>
    <property type="gene ID" value="WBGene00005111"/>
</dbReference>
<dbReference type="GeneID" id="191816"/>
<dbReference type="KEGG" id="cel:CELE_T19H12.4"/>
<dbReference type="UCSC" id="T19H12.4">
    <property type="organism name" value="c. elegans"/>
</dbReference>
<dbReference type="AGR" id="WB:WBGene00005111"/>
<dbReference type="CTD" id="191816"/>
<dbReference type="WormBase" id="T19H12.4">
    <property type="protein sequence ID" value="CE13758"/>
    <property type="gene ID" value="WBGene00005111"/>
    <property type="gene designation" value="srd-33"/>
</dbReference>
<dbReference type="eggNOG" id="ENOG502TFDM">
    <property type="taxonomic scope" value="Eukaryota"/>
</dbReference>
<dbReference type="GeneTree" id="ENSGT00970000195825"/>
<dbReference type="HOGENOM" id="CLU_057924_3_0_1"/>
<dbReference type="InParanoid" id="O01609"/>
<dbReference type="OMA" id="PIYFVMY"/>
<dbReference type="OrthoDB" id="5866685at2759"/>
<dbReference type="PhylomeDB" id="O01609"/>
<dbReference type="PRO" id="PR:O01609"/>
<dbReference type="Proteomes" id="UP000001940">
    <property type="component" value="Chromosome V"/>
</dbReference>
<dbReference type="Bgee" id="WBGene00005111">
    <property type="expression patterns" value="Expressed in larva"/>
</dbReference>
<dbReference type="GO" id="GO:0016020">
    <property type="term" value="C:membrane"/>
    <property type="evidence" value="ECO:0007669"/>
    <property type="project" value="UniProtKB-SubCell"/>
</dbReference>
<dbReference type="Gene3D" id="1.20.1070.10">
    <property type="entry name" value="Rhodopsin 7-helix transmembrane proteins"/>
    <property type="match status" value="1"/>
</dbReference>
<dbReference type="InterPro" id="IPR019421">
    <property type="entry name" value="7TM_GPCR_serpentine_rcpt_Srd"/>
</dbReference>
<dbReference type="InterPro" id="IPR017452">
    <property type="entry name" value="GPCR_Rhodpsn_7TM"/>
</dbReference>
<dbReference type="InterPro" id="IPR050920">
    <property type="entry name" value="Nematode_rcpt-like_delta"/>
</dbReference>
<dbReference type="PANTHER" id="PTHR22945:SF10">
    <property type="entry name" value="SERPENTINE RECEPTOR CLASS DELTA-33"/>
    <property type="match status" value="1"/>
</dbReference>
<dbReference type="PANTHER" id="PTHR22945">
    <property type="entry name" value="SERPENTINE RECEPTOR, CLASS D DELTA"/>
    <property type="match status" value="1"/>
</dbReference>
<dbReference type="Pfam" id="PF10317">
    <property type="entry name" value="7TM_GPCR_Srd"/>
    <property type="match status" value="1"/>
</dbReference>
<dbReference type="SUPFAM" id="SSF81321">
    <property type="entry name" value="Family A G protein-coupled receptor-like"/>
    <property type="match status" value="1"/>
</dbReference>
<feature type="chain" id="PRO_0000104520" description="Serpentine receptor class delta-33">
    <location>
        <begin position="1"/>
        <end position="342"/>
    </location>
</feature>
<feature type="transmembrane region" description="Helical" evidence="1">
    <location>
        <begin position="26"/>
        <end position="46"/>
    </location>
</feature>
<feature type="transmembrane region" description="Helical" evidence="1">
    <location>
        <begin position="62"/>
        <end position="82"/>
    </location>
</feature>
<feature type="transmembrane region" description="Helical" evidence="1">
    <location>
        <begin position="112"/>
        <end position="132"/>
    </location>
</feature>
<feature type="transmembrane region" description="Helical" evidence="1">
    <location>
        <begin position="148"/>
        <end position="168"/>
    </location>
</feature>
<feature type="transmembrane region" description="Helical" evidence="1">
    <location>
        <begin position="205"/>
        <end position="225"/>
    </location>
</feature>
<feature type="transmembrane region" description="Helical" evidence="1">
    <location>
        <begin position="261"/>
        <end position="281"/>
    </location>
</feature>
<feature type="transmembrane region" description="Helical" evidence="1">
    <location>
        <begin position="287"/>
        <end position="307"/>
    </location>
</feature>
<gene>
    <name type="primary">srd-33</name>
    <name type="ORF">T19H12.4</name>
</gene>
<evidence type="ECO:0000255" key="1"/>
<evidence type="ECO:0000305" key="2"/>
<name>SRD33_CAEEL</name>
<accession>O01609</accession>
<comment type="subcellular location">
    <subcellularLocation>
        <location evidence="2">Membrane</location>
        <topology evidence="2">Multi-pass membrane protein</topology>
    </subcellularLocation>
</comment>
<comment type="similarity">
    <text evidence="2">Belongs to the nematode receptor-like protein srd family.</text>
</comment>
<protein>
    <recommendedName>
        <fullName>Serpentine receptor class delta-33</fullName>
        <shortName>Protein srd-33</shortName>
    </recommendedName>
</protein>
<sequence>MPILRSVAAVLAPFTSDTYMNTADSIFVITVTILTSIGFLLNLLLLYLIIWKSPRNLTPYRIFLANTTITQLVYALFAVTSMPRVLAKHQYTIVIYLGPVQFFGEWFSYMSYVGILHLSLNSFISLMLSMIYRYFSIRFKRFTANTSIILCIIGYFFPFLIFASCSNIAISSSLSFNTAVLDGMVENLESYHMVLTTEISNHPSLIILTLAVTCGLVPIYFVMYWCRHQIHKTLKQTRSVHSPSTRDNARRLVRALTIQSIIPLVSVFPASIFWCLSQLGFVEPTMYSYFIIPCLSLGCIADPVVTIRCVLPYRRWILKLCNMSTTDMITSNQDKSTIFQKH</sequence>
<organism>
    <name type="scientific">Caenorhabditis elegans</name>
    <dbReference type="NCBI Taxonomy" id="6239"/>
    <lineage>
        <taxon>Eukaryota</taxon>
        <taxon>Metazoa</taxon>
        <taxon>Ecdysozoa</taxon>
        <taxon>Nematoda</taxon>
        <taxon>Chromadorea</taxon>
        <taxon>Rhabditida</taxon>
        <taxon>Rhabditina</taxon>
        <taxon>Rhabditomorpha</taxon>
        <taxon>Rhabditoidea</taxon>
        <taxon>Rhabditidae</taxon>
        <taxon>Peloderinae</taxon>
        <taxon>Caenorhabditis</taxon>
    </lineage>
</organism>
<keyword id="KW-0472">Membrane</keyword>
<keyword id="KW-1185">Reference proteome</keyword>
<keyword id="KW-0812">Transmembrane</keyword>
<keyword id="KW-1133">Transmembrane helix</keyword>